<reference key="1">
    <citation type="journal article" date="2009" name="Mol. Biol. Evol.">
        <title>Molecular evolution, functional variation, and proposed nomenclature of the gene family that includes sphingomyelinase D in sicariid spider venoms.</title>
        <authorList>
            <person name="Binford G.J."/>
            <person name="Bodner M.R."/>
            <person name="Cordes M.H."/>
            <person name="Baldwin K.L."/>
            <person name="Rynerson M.R."/>
            <person name="Burns S.N."/>
            <person name="Zobel-Thropp P.A."/>
        </authorList>
    </citation>
    <scope>NUCLEOTIDE SEQUENCE [MRNA]</scope>
    <scope>NOMENCLATURE</scope>
    <source>
        <tissue>Venom gland</tissue>
    </source>
</reference>
<protein>
    <recommendedName>
        <fullName evidence="6">Dermonecrotic toxin LruSicTox-alphaIC1d</fullName>
        <ecNumber evidence="4">4.6.1.-</ecNumber>
    </recommendedName>
    <alternativeName>
        <fullName>Phospholipase D</fullName>
        <shortName>PLD</shortName>
    </alternativeName>
    <alternativeName>
        <fullName>Sphingomyelin phosphodiesterase D</fullName>
        <shortName>SMD</shortName>
        <shortName>SMase D</shortName>
        <shortName>Sphingomyelinase D</shortName>
    </alternativeName>
</protein>
<accession>C0JB02</accession>
<proteinExistence type="evidence at transcript level"/>
<name>A1OD_LOXRU</name>
<sequence>WIMGHMVNSIAQIDEFVNLGANSIETDVSFDKQANPEYTYHGIPCDCGRNCLKWEYFNDFVKGLRRATTPGDSKYREKLVLVVFDLKTGSLYDNQAYDAGTKLAKNLLQHYWNNGNNGGRAYIVLSIPNLNHYKLIAGFKDTLKNEGHEDLLGKVGHDFSGNDDIPDVEEAYKKAGVTGHVWQSDGITNCFPRTLKRVRLAIANRDSGNGIINKVYYWTVDKRSTTRDSLDAGVDGIMTNYPDVIADVLSESAYKNKYKIATYEDNPWETFKA</sequence>
<organism>
    <name type="scientific">Loxosceles rufescens</name>
    <name type="common">Mediterranean recluse spider</name>
    <name type="synonym">Scytodes rufescens</name>
    <dbReference type="NCBI Taxonomy" id="571528"/>
    <lineage>
        <taxon>Eukaryota</taxon>
        <taxon>Metazoa</taxon>
        <taxon>Ecdysozoa</taxon>
        <taxon>Arthropoda</taxon>
        <taxon>Chelicerata</taxon>
        <taxon>Arachnida</taxon>
        <taxon>Araneae</taxon>
        <taxon>Araneomorphae</taxon>
        <taxon>Haplogynae</taxon>
        <taxon>Scytodoidea</taxon>
        <taxon>Sicariidae</taxon>
        <taxon>Loxosceles</taxon>
    </lineage>
</organism>
<comment type="function">
    <text evidence="1 3">Dermonecrotic toxins cleave the phosphodiester linkage between the phosphate and headgroup of certain phospholipids (sphingolipid and lysolipid substrates), forming an alcohol (often choline) and a cyclic phosphate (By similarity). This toxin acts on sphingomyelin (SM) (By similarity). It may also act on ceramide phosphoethanolamine (CPE), lysophosphatidylcholine (LPC) and lysophosphatidylethanolamine (LPE), but not on lysophosphatidylserine (LPS), and lysophosphatidylglycerol (LPG) (By similarity). It acts by transphosphatidylation, releasing exclusively cyclic phosphate products as second products (By similarity). Induces dermonecrosis, hemolysis, increased vascular permeability, edema, inflammatory response, and platelet aggregation (By similarity).</text>
</comment>
<comment type="catalytic activity">
    <reaction evidence="1">
        <text>an N-(acyl)-sphingosylphosphocholine = an N-(acyl)-sphingosyl-1,3-cyclic phosphate + choline</text>
        <dbReference type="Rhea" id="RHEA:60652"/>
        <dbReference type="ChEBI" id="CHEBI:15354"/>
        <dbReference type="ChEBI" id="CHEBI:64583"/>
        <dbReference type="ChEBI" id="CHEBI:143892"/>
    </reaction>
</comment>
<comment type="catalytic activity">
    <reaction evidence="1">
        <text>an N-(acyl)-sphingosylphosphoethanolamine = an N-(acyl)-sphingosyl-1,3-cyclic phosphate + ethanolamine</text>
        <dbReference type="Rhea" id="RHEA:60648"/>
        <dbReference type="ChEBI" id="CHEBI:57603"/>
        <dbReference type="ChEBI" id="CHEBI:143891"/>
        <dbReference type="ChEBI" id="CHEBI:143892"/>
    </reaction>
</comment>
<comment type="catalytic activity">
    <reaction evidence="1">
        <text>a 1-acyl-sn-glycero-3-phosphocholine = a 1-acyl-sn-glycero-2,3-cyclic phosphate + choline</text>
        <dbReference type="Rhea" id="RHEA:60700"/>
        <dbReference type="ChEBI" id="CHEBI:15354"/>
        <dbReference type="ChEBI" id="CHEBI:58168"/>
        <dbReference type="ChEBI" id="CHEBI:143947"/>
    </reaction>
</comment>
<comment type="catalytic activity">
    <reaction evidence="1">
        <text>a 1-acyl-sn-glycero-3-phosphoethanolamine = a 1-acyl-sn-glycero-2,3-cyclic phosphate + ethanolamine</text>
        <dbReference type="Rhea" id="RHEA:60704"/>
        <dbReference type="ChEBI" id="CHEBI:57603"/>
        <dbReference type="ChEBI" id="CHEBI:64381"/>
        <dbReference type="ChEBI" id="CHEBI:143947"/>
    </reaction>
</comment>
<comment type="cofactor">
    <cofactor evidence="5">
        <name>Mg(2+)</name>
        <dbReference type="ChEBI" id="CHEBI:18420"/>
    </cofactor>
    <text evidence="5">Binds 1 Mg(2+) ion per subunit.</text>
</comment>
<comment type="subcellular location">
    <subcellularLocation>
        <location evidence="8">Secreted</location>
    </subcellularLocation>
</comment>
<comment type="tissue specificity">
    <text evidence="8">Expressed by the venom gland.</text>
</comment>
<comment type="similarity">
    <text evidence="7">Belongs to the arthropod phospholipase D family. Class II subfamily.</text>
</comment>
<comment type="caution">
    <text evidence="1 2 4">The most common activity assay for dermonecrotic toxins detects enzymatic activity by monitoring choline release from substrate. Liberation of choline from sphingomyelin (SM) or lysophosphatidylcholine (LPC) is commonly assumed to result from substrate hydrolysis, giving either ceramide-1-phosphate (C1P) or lysophosphatidic acid (LPA), respectively, as a second product. However, two studies from Lajoie and colleagues (2013 and 2015) report the observation of exclusive formation of cyclic phosphate products as second products, resulting from intramolecular transphosphatidylation. Cyclic phosphates have vastly different biological properties from their monoester counterparts, and they may be relevant to the pathology of brown spider envenomation.</text>
</comment>
<feature type="chain" id="PRO_0000392817" description="Dermonecrotic toxin LruSicTox-alphaIC1d">
    <location>
        <begin position="1" status="less than"/>
        <end position="273"/>
    </location>
</feature>
<feature type="active site" evidence="5">
    <location>
        <position position="5"/>
    </location>
</feature>
<feature type="active site" description="Nucleophile" evidence="5">
    <location>
        <position position="41"/>
    </location>
</feature>
<feature type="binding site" evidence="5">
    <location>
        <position position="25"/>
    </location>
    <ligand>
        <name>Mg(2+)</name>
        <dbReference type="ChEBI" id="CHEBI:18420"/>
    </ligand>
</feature>
<feature type="binding site" evidence="5">
    <location>
        <position position="27"/>
    </location>
    <ligand>
        <name>Mg(2+)</name>
        <dbReference type="ChEBI" id="CHEBI:18420"/>
    </ligand>
</feature>
<feature type="binding site" evidence="5">
    <location>
        <position position="85"/>
    </location>
    <ligand>
        <name>Mg(2+)</name>
        <dbReference type="ChEBI" id="CHEBI:18420"/>
    </ligand>
</feature>
<feature type="disulfide bond" evidence="3">
    <location>
        <begin position="45"/>
        <end position="51"/>
    </location>
</feature>
<feature type="disulfide bond" evidence="3">
    <location>
        <begin position="47"/>
        <end position="190"/>
    </location>
</feature>
<feature type="non-terminal residue">
    <location>
        <position position="1"/>
    </location>
</feature>
<keyword id="KW-0204">Cytolysis</keyword>
<keyword id="KW-1061">Dermonecrotic toxin</keyword>
<keyword id="KW-1015">Disulfide bond</keyword>
<keyword id="KW-0354">Hemolysis</keyword>
<keyword id="KW-0442">Lipid degradation</keyword>
<keyword id="KW-0443">Lipid metabolism</keyword>
<keyword id="KW-0456">Lyase</keyword>
<keyword id="KW-0460">Magnesium</keyword>
<keyword id="KW-0479">Metal-binding</keyword>
<keyword id="KW-0964">Secreted</keyword>
<keyword id="KW-0800">Toxin</keyword>
<dbReference type="EC" id="4.6.1.-" evidence="4"/>
<dbReference type="EMBL" id="FJ171437">
    <property type="protein sequence ID" value="ACN48933.1"/>
    <property type="molecule type" value="mRNA"/>
</dbReference>
<dbReference type="SMR" id="C0JB02"/>
<dbReference type="ABCD" id="C0JB02">
    <property type="antibodies" value="2 sequenced antibodies"/>
</dbReference>
<dbReference type="GO" id="GO:0005576">
    <property type="term" value="C:extracellular region"/>
    <property type="evidence" value="ECO:0007669"/>
    <property type="project" value="UniProtKB-SubCell"/>
</dbReference>
<dbReference type="GO" id="GO:0016829">
    <property type="term" value="F:lyase activity"/>
    <property type="evidence" value="ECO:0007669"/>
    <property type="project" value="UniProtKB-KW"/>
</dbReference>
<dbReference type="GO" id="GO:0046872">
    <property type="term" value="F:metal ion binding"/>
    <property type="evidence" value="ECO:0007669"/>
    <property type="project" value="UniProtKB-KW"/>
</dbReference>
<dbReference type="GO" id="GO:0008081">
    <property type="term" value="F:phosphoric diester hydrolase activity"/>
    <property type="evidence" value="ECO:0007669"/>
    <property type="project" value="InterPro"/>
</dbReference>
<dbReference type="GO" id="GO:0090729">
    <property type="term" value="F:toxin activity"/>
    <property type="evidence" value="ECO:0007669"/>
    <property type="project" value="UniProtKB-KW"/>
</dbReference>
<dbReference type="GO" id="GO:0031640">
    <property type="term" value="P:killing of cells of another organism"/>
    <property type="evidence" value="ECO:0007669"/>
    <property type="project" value="UniProtKB-KW"/>
</dbReference>
<dbReference type="GO" id="GO:0016042">
    <property type="term" value="P:lipid catabolic process"/>
    <property type="evidence" value="ECO:0007669"/>
    <property type="project" value="UniProtKB-KW"/>
</dbReference>
<dbReference type="CDD" id="cd08576">
    <property type="entry name" value="GDPD_like_SMaseD_PLD"/>
    <property type="match status" value="1"/>
</dbReference>
<dbReference type="Gene3D" id="3.20.20.190">
    <property type="entry name" value="Phosphatidylinositol (PI) phosphodiesterase"/>
    <property type="match status" value="1"/>
</dbReference>
<dbReference type="InterPro" id="IPR017946">
    <property type="entry name" value="PLC-like_Pdiesterase_TIM-brl"/>
</dbReference>
<dbReference type="Pfam" id="PF13653">
    <property type="entry name" value="GDPD_2"/>
    <property type="match status" value="1"/>
</dbReference>
<dbReference type="SUPFAM" id="SSF51695">
    <property type="entry name" value="PLC-like phosphodiesterases"/>
    <property type="match status" value="1"/>
</dbReference>
<evidence type="ECO:0000250" key="1">
    <source>
        <dbReference type="UniProtKB" id="A0A0D4WTV1"/>
    </source>
</evidence>
<evidence type="ECO:0000250" key="2">
    <source>
        <dbReference type="UniProtKB" id="A0A0D4WV12"/>
    </source>
</evidence>
<evidence type="ECO:0000250" key="3">
    <source>
        <dbReference type="UniProtKB" id="P0CE80"/>
    </source>
</evidence>
<evidence type="ECO:0000250" key="4">
    <source>
        <dbReference type="UniProtKB" id="Q4ZFU2"/>
    </source>
</evidence>
<evidence type="ECO:0000250" key="5">
    <source>
        <dbReference type="UniProtKB" id="Q8I914"/>
    </source>
</evidence>
<evidence type="ECO:0000303" key="6">
    <source>
    </source>
</evidence>
<evidence type="ECO:0000305" key="7"/>
<evidence type="ECO:0000305" key="8">
    <source>
    </source>
</evidence>